<sequence>MGRRCCVANCPSTSRLLEHNGVTYHSFPLDPIIRAIWIKNSRISLERQITKSVLVCSRHFRRLDFNTIRNGKYLLKPRVFPTVFPWGKMDTAEIEADQRALQHASVEGTTETPGNAQSSTNDDVIKATVDQIVAQILSESAERKATEEGKTGKAADDVKNTPESGEDANKAAAKEPSGTPVAASSEATVPAPGSASSSNSPLPGTPPKYSNPHNLTIGARLEALSVEGNWLPARIVEVNETEQTLLVRFERNHKLKVSPSTSGSFQEWMAIKSERLRQRLSNRVLPVFELDEKCMARWSGPRKFPGTIRKLLGNDTYEVLFDDGYVKNVRAVHMNKMPKQLPPVQVAEEGASKSPTPVGTPVSSAPVAPKRASTGSLGGSSGSSGSKKSKCAPQRRDWPLLDMASLDIASLGLPEIPHDGEWTCHWVNDQPIGTEGFLIVGEHQKPTVIVQDWRLPPGWIKHMYQRSNVLGKWDVILVSPSGKRFRSKSDLKLFLESQNLVYNPDVYDFSIHRRRAKDINAYVYTHGYNPQPPPKPRPMDVSMNSTLDQSITSQHSLPSTPMPVKESQYMEAPVASLMPPAELMSPQTQPADETKPKIEAEILEASEGGTSQLMLADPHVVENGFAFIGGLKVKIQDNLYVCPREDCAKTYRKEDFLLIHIRHYHKEFAEHVSHCPKMQELAVKRTHPSSIDQVEAVPKNQIPNQQFFAKMHQQDLQQSRSFKRQSVSATATSSTPSDITPTKALLSPKMEPPSVSPTVESGIKQEDVSLDAGPTQSFNPSLSRSCKRARLSPSKRPSGSRKSNRQRSQRRPILSDNPAGHGLTEQDVEETRQSFNTPTPDTRIDSKKRRSGAATTPISSIDSPAMGDSVSTPSSNDQTDINAALAPPPAETLSKAPQYIKENGELIRIVRMRQEEIINCICEYGEEDGLMIQCELCLCWQHGACNGIVKEADVPDKYVCYICRNPQRGRDSMRFKHDQDWLFEGKLPVAAYHTANPQATKQFELLKRSHTLTGNLLDAKRSMHSLLVKINIARNRCHPKLYLWAKKWDEDNLDSTALTPVKRAKLEAPDLPNVPQPEAAIDPEECQYRLIEHIKVQQSLVLDRLNDIEAEMDELEKEDTLDDLKDADISTTKEALATFIKELETMKRLAKLNQVANMKQTLRDSATSK</sequence>
<name>MBDR2_DROME</name>
<proteinExistence type="evidence at protein level"/>
<protein>
    <recommendedName>
        <fullName evidence="9">Protein MBD-R2</fullName>
    </recommendedName>
</protein>
<organism>
    <name type="scientific">Drosophila melanogaster</name>
    <name type="common">Fruit fly</name>
    <dbReference type="NCBI Taxonomy" id="7227"/>
    <lineage>
        <taxon>Eukaryota</taxon>
        <taxon>Metazoa</taxon>
        <taxon>Ecdysozoa</taxon>
        <taxon>Arthropoda</taxon>
        <taxon>Hexapoda</taxon>
        <taxon>Insecta</taxon>
        <taxon>Pterygota</taxon>
        <taxon>Neoptera</taxon>
        <taxon>Endopterygota</taxon>
        <taxon>Diptera</taxon>
        <taxon>Brachycera</taxon>
        <taxon>Muscomorpha</taxon>
        <taxon>Ephydroidea</taxon>
        <taxon>Drosophilidae</taxon>
        <taxon>Drosophila</taxon>
        <taxon>Sophophora</taxon>
    </lineage>
</organism>
<feature type="chain" id="PRO_0000460336" description="Protein MBD-R2">
    <location>
        <begin position="1"/>
        <end position="1169"/>
    </location>
</feature>
<feature type="domain" description="MBD" evidence="3">
    <location>
        <begin position="445"/>
        <end position="514"/>
    </location>
</feature>
<feature type="zinc finger region" description="THAP-type" evidence="2">
    <location>
        <begin position="5"/>
        <end position="59"/>
    </location>
</feature>
<feature type="zinc finger region" description="C2H2-type" evidence="1">
    <location>
        <begin position="640"/>
        <end position="665"/>
    </location>
</feature>
<feature type="region of interest" description="Disordered" evidence="4">
    <location>
        <begin position="99"/>
        <end position="122"/>
    </location>
</feature>
<feature type="region of interest" description="Disordered" evidence="4">
    <location>
        <begin position="140"/>
        <end position="211"/>
    </location>
</feature>
<feature type="region of interest" description="Disordered" evidence="4">
    <location>
        <begin position="347"/>
        <end position="394"/>
    </location>
</feature>
<feature type="region of interest" description="Disordered" evidence="4">
    <location>
        <begin position="527"/>
        <end position="565"/>
    </location>
</feature>
<feature type="region of interest" description="Disordered" evidence="4">
    <location>
        <begin position="714"/>
        <end position="890"/>
    </location>
</feature>
<feature type="compositionally biased region" description="Polar residues" evidence="4">
    <location>
        <begin position="107"/>
        <end position="122"/>
    </location>
</feature>
<feature type="compositionally biased region" description="Basic and acidic residues" evidence="4">
    <location>
        <begin position="140"/>
        <end position="160"/>
    </location>
</feature>
<feature type="compositionally biased region" description="Low complexity" evidence="4">
    <location>
        <begin position="190"/>
        <end position="202"/>
    </location>
</feature>
<feature type="compositionally biased region" description="Polar residues" evidence="4">
    <location>
        <begin position="353"/>
        <end position="363"/>
    </location>
</feature>
<feature type="compositionally biased region" description="Polar residues" evidence="4">
    <location>
        <begin position="542"/>
        <end position="559"/>
    </location>
</feature>
<feature type="compositionally biased region" description="Low complexity" evidence="4">
    <location>
        <begin position="726"/>
        <end position="742"/>
    </location>
</feature>
<feature type="compositionally biased region" description="Polar residues" evidence="4">
    <location>
        <begin position="774"/>
        <end position="784"/>
    </location>
</feature>
<feature type="compositionally biased region" description="Basic residues" evidence="4">
    <location>
        <begin position="798"/>
        <end position="810"/>
    </location>
</feature>
<feature type="compositionally biased region" description="Polar residues" evidence="4">
    <location>
        <begin position="853"/>
        <end position="862"/>
    </location>
</feature>
<feature type="compositionally biased region" description="Polar residues" evidence="4">
    <location>
        <begin position="869"/>
        <end position="881"/>
    </location>
</feature>
<accession>Q9VGA4</accession>
<reference key="1">
    <citation type="journal article" date="2000" name="Science">
        <title>The genome sequence of Drosophila melanogaster.</title>
        <authorList>
            <person name="Adams M.D."/>
            <person name="Celniker S.E."/>
            <person name="Holt R.A."/>
            <person name="Evans C.A."/>
            <person name="Gocayne J.D."/>
            <person name="Amanatides P.G."/>
            <person name="Scherer S.E."/>
            <person name="Li P.W."/>
            <person name="Hoskins R.A."/>
            <person name="Galle R.F."/>
            <person name="George R.A."/>
            <person name="Lewis S.E."/>
            <person name="Richards S."/>
            <person name="Ashburner M."/>
            <person name="Henderson S.N."/>
            <person name="Sutton G.G."/>
            <person name="Wortman J.R."/>
            <person name="Yandell M.D."/>
            <person name="Zhang Q."/>
            <person name="Chen L.X."/>
            <person name="Brandon R.C."/>
            <person name="Rogers Y.-H.C."/>
            <person name="Blazej R.G."/>
            <person name="Champe M."/>
            <person name="Pfeiffer B.D."/>
            <person name="Wan K.H."/>
            <person name="Doyle C."/>
            <person name="Baxter E.G."/>
            <person name="Helt G."/>
            <person name="Nelson C.R."/>
            <person name="Miklos G.L.G."/>
            <person name="Abril J.F."/>
            <person name="Agbayani A."/>
            <person name="An H.-J."/>
            <person name="Andrews-Pfannkoch C."/>
            <person name="Baldwin D."/>
            <person name="Ballew R.M."/>
            <person name="Basu A."/>
            <person name="Baxendale J."/>
            <person name="Bayraktaroglu L."/>
            <person name="Beasley E.M."/>
            <person name="Beeson K.Y."/>
            <person name="Benos P.V."/>
            <person name="Berman B.P."/>
            <person name="Bhandari D."/>
            <person name="Bolshakov S."/>
            <person name="Borkova D."/>
            <person name="Botchan M.R."/>
            <person name="Bouck J."/>
            <person name="Brokstein P."/>
            <person name="Brottier P."/>
            <person name="Burtis K.C."/>
            <person name="Busam D.A."/>
            <person name="Butler H."/>
            <person name="Cadieu E."/>
            <person name="Center A."/>
            <person name="Chandra I."/>
            <person name="Cherry J.M."/>
            <person name="Cawley S."/>
            <person name="Dahlke C."/>
            <person name="Davenport L.B."/>
            <person name="Davies P."/>
            <person name="de Pablos B."/>
            <person name="Delcher A."/>
            <person name="Deng Z."/>
            <person name="Mays A.D."/>
            <person name="Dew I."/>
            <person name="Dietz S.M."/>
            <person name="Dodson K."/>
            <person name="Doup L.E."/>
            <person name="Downes M."/>
            <person name="Dugan-Rocha S."/>
            <person name="Dunkov B.C."/>
            <person name="Dunn P."/>
            <person name="Durbin K.J."/>
            <person name="Evangelista C.C."/>
            <person name="Ferraz C."/>
            <person name="Ferriera S."/>
            <person name="Fleischmann W."/>
            <person name="Fosler C."/>
            <person name="Gabrielian A.E."/>
            <person name="Garg N.S."/>
            <person name="Gelbart W.M."/>
            <person name="Glasser K."/>
            <person name="Glodek A."/>
            <person name="Gong F."/>
            <person name="Gorrell J.H."/>
            <person name="Gu Z."/>
            <person name="Guan P."/>
            <person name="Harris M."/>
            <person name="Harris N.L."/>
            <person name="Harvey D.A."/>
            <person name="Heiman T.J."/>
            <person name="Hernandez J.R."/>
            <person name="Houck J."/>
            <person name="Hostin D."/>
            <person name="Houston K.A."/>
            <person name="Howland T.J."/>
            <person name="Wei M.-H."/>
            <person name="Ibegwam C."/>
            <person name="Jalali M."/>
            <person name="Kalush F."/>
            <person name="Karpen G.H."/>
            <person name="Ke Z."/>
            <person name="Kennison J.A."/>
            <person name="Ketchum K.A."/>
            <person name="Kimmel B.E."/>
            <person name="Kodira C.D."/>
            <person name="Kraft C.L."/>
            <person name="Kravitz S."/>
            <person name="Kulp D."/>
            <person name="Lai Z."/>
            <person name="Lasko P."/>
            <person name="Lei Y."/>
            <person name="Levitsky A.A."/>
            <person name="Li J.H."/>
            <person name="Li Z."/>
            <person name="Liang Y."/>
            <person name="Lin X."/>
            <person name="Liu X."/>
            <person name="Mattei B."/>
            <person name="McIntosh T.C."/>
            <person name="McLeod M.P."/>
            <person name="McPherson D."/>
            <person name="Merkulov G."/>
            <person name="Milshina N.V."/>
            <person name="Mobarry C."/>
            <person name="Morris J."/>
            <person name="Moshrefi A."/>
            <person name="Mount S.M."/>
            <person name="Moy M."/>
            <person name="Murphy B."/>
            <person name="Murphy L."/>
            <person name="Muzny D.M."/>
            <person name="Nelson D.L."/>
            <person name="Nelson D.R."/>
            <person name="Nelson K.A."/>
            <person name="Nixon K."/>
            <person name="Nusskern D.R."/>
            <person name="Pacleb J.M."/>
            <person name="Palazzolo M."/>
            <person name="Pittman G.S."/>
            <person name="Pan S."/>
            <person name="Pollard J."/>
            <person name="Puri V."/>
            <person name="Reese M.G."/>
            <person name="Reinert K."/>
            <person name="Remington K."/>
            <person name="Saunders R.D.C."/>
            <person name="Scheeler F."/>
            <person name="Shen H."/>
            <person name="Shue B.C."/>
            <person name="Siden-Kiamos I."/>
            <person name="Simpson M."/>
            <person name="Skupski M.P."/>
            <person name="Smith T.J."/>
            <person name="Spier E."/>
            <person name="Spradling A.C."/>
            <person name="Stapleton M."/>
            <person name="Strong R."/>
            <person name="Sun E."/>
            <person name="Svirskas R."/>
            <person name="Tector C."/>
            <person name="Turner R."/>
            <person name="Venter E."/>
            <person name="Wang A.H."/>
            <person name="Wang X."/>
            <person name="Wang Z.-Y."/>
            <person name="Wassarman D.A."/>
            <person name="Weinstock G.M."/>
            <person name="Weissenbach J."/>
            <person name="Williams S.M."/>
            <person name="Woodage T."/>
            <person name="Worley K.C."/>
            <person name="Wu D."/>
            <person name="Yang S."/>
            <person name="Yao Q.A."/>
            <person name="Ye J."/>
            <person name="Yeh R.-F."/>
            <person name="Zaveri J.S."/>
            <person name="Zhan M."/>
            <person name="Zhang G."/>
            <person name="Zhao Q."/>
            <person name="Zheng L."/>
            <person name="Zheng X.H."/>
            <person name="Zhong F.N."/>
            <person name="Zhong W."/>
            <person name="Zhou X."/>
            <person name="Zhu S.C."/>
            <person name="Zhu X."/>
            <person name="Smith H.O."/>
            <person name="Gibbs R.A."/>
            <person name="Myers E.W."/>
            <person name="Rubin G.M."/>
            <person name="Venter J.C."/>
        </authorList>
    </citation>
    <scope>NUCLEOTIDE SEQUENCE [LARGE SCALE GENOMIC DNA]</scope>
    <source>
        <strain>Berkeley</strain>
    </source>
</reference>
<reference key="2">
    <citation type="journal article" date="2002" name="Genome Biol.">
        <title>Annotation of the Drosophila melanogaster euchromatic genome: a systematic review.</title>
        <authorList>
            <person name="Misra S."/>
            <person name="Crosby M.A."/>
            <person name="Mungall C.J."/>
            <person name="Matthews B.B."/>
            <person name="Campbell K.S."/>
            <person name="Hradecky P."/>
            <person name="Huang Y."/>
            <person name="Kaminker J.S."/>
            <person name="Millburn G.H."/>
            <person name="Prochnik S.E."/>
            <person name="Smith C.D."/>
            <person name="Tupy J.L."/>
            <person name="Whitfield E.J."/>
            <person name="Bayraktaroglu L."/>
            <person name="Berman B.P."/>
            <person name="Bettencourt B.R."/>
            <person name="Celniker S.E."/>
            <person name="de Grey A.D.N.J."/>
            <person name="Drysdale R.A."/>
            <person name="Harris N.L."/>
            <person name="Richter J."/>
            <person name="Russo S."/>
            <person name="Schroeder A.J."/>
            <person name="Shu S.Q."/>
            <person name="Stapleton M."/>
            <person name="Yamada C."/>
            <person name="Ashburner M."/>
            <person name="Gelbart W.M."/>
            <person name="Rubin G.M."/>
            <person name="Lewis S.E."/>
        </authorList>
    </citation>
    <scope>GENOME REANNOTATION</scope>
    <source>
        <strain>Berkeley</strain>
    </source>
</reference>
<reference key="3">
    <citation type="journal article" date="2010" name="Mol. Cell">
        <title>The activation potential of MOF is constrained for dosage compensation.</title>
        <authorList>
            <person name="Prestel M."/>
            <person name="Feller C."/>
            <person name="Straub T."/>
            <person name="Mitloehner H."/>
            <person name="Becker P.B."/>
        </authorList>
    </citation>
    <scope>FUNCTION</scope>
    <scope>SUBCELLULAR LOCATION</scope>
    <scope>IDENTIFICATION IN THE NSL COMPLEX</scope>
</reference>
<reference key="4">
    <citation type="journal article" date="2010" name="Mol. Cell">
        <title>The nonspecific lethal complex is a transcriptional regulator in Drosophila.</title>
        <authorList>
            <person name="Raja S.J."/>
            <person name="Charapitsa I."/>
            <person name="Conrad T."/>
            <person name="Vaquerizas J.M."/>
            <person name="Gebhardt P."/>
            <person name="Holz H."/>
            <person name="Kadlec J."/>
            <person name="Fraterman S."/>
            <person name="Luscombe N.M."/>
            <person name="Akhtar A."/>
        </authorList>
    </citation>
    <scope>FUNCTION</scope>
    <scope>SUBCELLULAR LOCATION</scope>
    <scope>IDENTIFICATION IN THE NSL COMPLEX</scope>
</reference>
<reference key="5">
    <citation type="journal article" date="2012" name="PLoS Genet.">
        <title>The NSL complex regulates housekeeping genes in Drosophila.</title>
        <authorList>
            <person name="Lam K.C."/>
            <person name="Muehlpfordt F."/>
            <person name="Vaquerizas J.M."/>
            <person name="Raja S.J."/>
            <person name="Holz H."/>
            <person name="Luscombe N.M."/>
            <person name="Manke T."/>
            <person name="Akhtar A."/>
        </authorList>
    </citation>
    <scope>FUNCTION</scope>
    <scope>IDENTIFICATION IN THE NSL COMPLEX</scope>
</reference>
<dbReference type="EMBL" id="AE014297">
    <property type="protein sequence ID" value="AAF54781.2"/>
    <property type="molecule type" value="Genomic_DNA"/>
</dbReference>
<dbReference type="RefSeq" id="NP_731688.2">
    <property type="nucleotide sequence ID" value="NM_169461.3"/>
</dbReference>
<dbReference type="SMR" id="Q9VGA4"/>
<dbReference type="FunCoup" id="Q9VGA4">
    <property type="interactions" value="1618"/>
</dbReference>
<dbReference type="IntAct" id="Q9VGA4">
    <property type="interactions" value="15"/>
</dbReference>
<dbReference type="STRING" id="7227.FBpp0082081"/>
<dbReference type="GlyGen" id="Q9VGA4">
    <property type="glycosylation" value="2 sites"/>
</dbReference>
<dbReference type="PaxDb" id="7227-FBpp0082081"/>
<dbReference type="EnsemblMetazoa" id="FBtr0082611">
    <property type="protein sequence ID" value="FBpp0082081"/>
    <property type="gene ID" value="FBgn0038016"/>
</dbReference>
<dbReference type="GeneID" id="41498"/>
<dbReference type="KEGG" id="dme:Dmel_CG10042"/>
<dbReference type="UCSC" id="CG10042-RB">
    <property type="organism name" value="d. melanogaster"/>
</dbReference>
<dbReference type="AGR" id="FB:FBgn0038016"/>
<dbReference type="CTD" id="41498"/>
<dbReference type="FlyBase" id="FBgn0038016">
    <property type="gene designation" value="MBD-R2"/>
</dbReference>
<dbReference type="VEuPathDB" id="VectorBase:FBgn0038016"/>
<dbReference type="eggNOG" id="KOG1844">
    <property type="taxonomic scope" value="Eukaryota"/>
</dbReference>
<dbReference type="eggNOG" id="KOG4161">
    <property type="taxonomic scope" value="Eukaryota"/>
</dbReference>
<dbReference type="GeneTree" id="ENSGT00940000173669"/>
<dbReference type="HOGENOM" id="CLU_005642_0_0_1"/>
<dbReference type="InParanoid" id="Q9VGA4"/>
<dbReference type="OMA" id="KCMARWS"/>
<dbReference type="OrthoDB" id="161570at2759"/>
<dbReference type="PhylomeDB" id="Q9VGA4"/>
<dbReference type="Reactome" id="R-DME-3214847">
    <property type="pathway name" value="HATs acetylate histones"/>
</dbReference>
<dbReference type="Reactome" id="R-DME-6804759">
    <property type="pathway name" value="Regulation of TP53 Activity through Association with Co-factors"/>
</dbReference>
<dbReference type="Reactome" id="R-DME-9772755">
    <property type="pathway name" value="Formation of WDR5-containing histone-modifying complexes"/>
</dbReference>
<dbReference type="BioGRID-ORCS" id="41498">
    <property type="hits" value="0 hits in 3 CRISPR screens"/>
</dbReference>
<dbReference type="GenomeRNAi" id="41498"/>
<dbReference type="Proteomes" id="UP000000803">
    <property type="component" value="Chromosome 3R"/>
</dbReference>
<dbReference type="Bgee" id="FBgn0038016">
    <property type="expression patterns" value="Expressed in oocyte and 88 other cell types or tissues"/>
</dbReference>
<dbReference type="ExpressionAtlas" id="Q9VGA4">
    <property type="expression patterns" value="baseline and differential"/>
</dbReference>
<dbReference type="GO" id="GO:0000785">
    <property type="term" value="C:chromatin"/>
    <property type="evidence" value="ECO:0000314"/>
    <property type="project" value="UniProtKB"/>
</dbReference>
<dbReference type="GO" id="GO:0000791">
    <property type="term" value="C:euchromatin"/>
    <property type="evidence" value="ECO:0000314"/>
    <property type="project" value="FlyBase"/>
</dbReference>
<dbReference type="GO" id="GO:0044545">
    <property type="term" value="C:NSL complex"/>
    <property type="evidence" value="ECO:0000314"/>
    <property type="project" value="UniProtKB"/>
</dbReference>
<dbReference type="GO" id="GO:0005634">
    <property type="term" value="C:nucleus"/>
    <property type="evidence" value="ECO:0000314"/>
    <property type="project" value="FlyBase"/>
</dbReference>
<dbReference type="GO" id="GO:0005700">
    <property type="term" value="C:polytene chromosome"/>
    <property type="evidence" value="ECO:0000314"/>
    <property type="project" value="UniProtKB"/>
</dbReference>
<dbReference type="GO" id="GO:0005705">
    <property type="term" value="C:polytene chromosome interband"/>
    <property type="evidence" value="ECO:0000314"/>
    <property type="project" value="FlyBase"/>
</dbReference>
<dbReference type="GO" id="GO:0003677">
    <property type="term" value="F:DNA binding"/>
    <property type="evidence" value="ECO:0007669"/>
    <property type="project" value="UniProtKB-KW"/>
</dbReference>
<dbReference type="GO" id="GO:1990841">
    <property type="term" value="F:promoter-specific chromatin binding"/>
    <property type="evidence" value="ECO:0000314"/>
    <property type="project" value="UniProtKB"/>
</dbReference>
<dbReference type="GO" id="GO:0008270">
    <property type="term" value="F:zinc ion binding"/>
    <property type="evidence" value="ECO:0007669"/>
    <property type="project" value="UniProtKB-KW"/>
</dbReference>
<dbReference type="GO" id="GO:0006325">
    <property type="term" value="P:chromatin organization"/>
    <property type="evidence" value="ECO:0007669"/>
    <property type="project" value="UniProtKB-KW"/>
</dbReference>
<dbReference type="GO" id="GO:0045944">
    <property type="term" value="P:positive regulation of transcription by RNA polymerase II"/>
    <property type="evidence" value="ECO:0000315"/>
    <property type="project" value="FlyBase"/>
</dbReference>
<dbReference type="GO" id="GO:0006357">
    <property type="term" value="P:regulation of transcription by RNA polymerase II"/>
    <property type="evidence" value="ECO:0000318"/>
    <property type="project" value="GO_Central"/>
</dbReference>
<dbReference type="CDD" id="cd20104">
    <property type="entry name" value="MBT_PHF20L1-like"/>
    <property type="match status" value="1"/>
</dbReference>
<dbReference type="CDD" id="cd01396">
    <property type="entry name" value="MeCP2_MBD"/>
    <property type="match status" value="1"/>
</dbReference>
<dbReference type="CDD" id="cd20386">
    <property type="entry name" value="Tudor_PHF20-like"/>
    <property type="match status" value="1"/>
</dbReference>
<dbReference type="FunFam" id="2.30.30.140:FF:000153">
    <property type="entry name" value="GM26024"/>
    <property type="match status" value="1"/>
</dbReference>
<dbReference type="FunFam" id="3.30.890.10:FF:000009">
    <property type="entry name" value="Methyl-CpG binding domain protein 4"/>
    <property type="match status" value="1"/>
</dbReference>
<dbReference type="Gene3D" id="2.30.30.140">
    <property type="match status" value="2"/>
</dbReference>
<dbReference type="Gene3D" id="3.30.890.10">
    <property type="entry name" value="Methyl-cpg-binding Protein 2, Chain A"/>
    <property type="match status" value="1"/>
</dbReference>
<dbReference type="Gene3D" id="6.20.210.20">
    <property type="entry name" value="THAP domain"/>
    <property type="match status" value="1"/>
</dbReference>
<dbReference type="Gene3D" id="3.30.40.10">
    <property type="entry name" value="Zinc/RING finger domain, C3HC4 (zinc finger)"/>
    <property type="match status" value="1"/>
</dbReference>
<dbReference type="InterPro" id="IPR016177">
    <property type="entry name" value="DNA-bd_dom_sf"/>
</dbReference>
<dbReference type="InterPro" id="IPR001739">
    <property type="entry name" value="Methyl_CpG_DNA-bd"/>
</dbReference>
<dbReference type="InterPro" id="IPR043449">
    <property type="entry name" value="PHF20-like"/>
</dbReference>
<dbReference type="InterPro" id="IPR006612">
    <property type="entry name" value="THAP_Znf"/>
</dbReference>
<dbReference type="InterPro" id="IPR038441">
    <property type="entry name" value="THAP_Znf_sf"/>
</dbReference>
<dbReference type="InterPro" id="IPR002999">
    <property type="entry name" value="Tudor"/>
</dbReference>
<dbReference type="InterPro" id="IPR019786">
    <property type="entry name" value="Zinc_finger_PHD-type_CS"/>
</dbReference>
<dbReference type="InterPro" id="IPR013087">
    <property type="entry name" value="Znf_C2H2_type"/>
</dbReference>
<dbReference type="InterPro" id="IPR011011">
    <property type="entry name" value="Znf_FYVE_PHD"/>
</dbReference>
<dbReference type="InterPro" id="IPR013083">
    <property type="entry name" value="Znf_RING/FYVE/PHD"/>
</dbReference>
<dbReference type="PANTHER" id="PTHR15856:SF51">
    <property type="entry name" value="MBD-R2"/>
    <property type="match status" value="1"/>
</dbReference>
<dbReference type="PANTHER" id="PTHR15856">
    <property type="entry name" value="PHD FINGER PROTEIN 20-RELATED"/>
    <property type="match status" value="1"/>
</dbReference>
<dbReference type="Pfam" id="PF01429">
    <property type="entry name" value="MBD"/>
    <property type="match status" value="1"/>
</dbReference>
<dbReference type="Pfam" id="PF20826">
    <property type="entry name" value="PHD_5"/>
    <property type="match status" value="1"/>
</dbReference>
<dbReference type="Pfam" id="PF05485">
    <property type="entry name" value="THAP"/>
    <property type="match status" value="1"/>
</dbReference>
<dbReference type="SMART" id="SM00391">
    <property type="entry name" value="MBD"/>
    <property type="match status" value="1"/>
</dbReference>
<dbReference type="SMART" id="SM00980">
    <property type="entry name" value="THAP"/>
    <property type="match status" value="1"/>
</dbReference>
<dbReference type="SMART" id="SM00333">
    <property type="entry name" value="TUDOR"/>
    <property type="match status" value="2"/>
</dbReference>
<dbReference type="SUPFAM" id="SSF54171">
    <property type="entry name" value="DNA-binding domain"/>
    <property type="match status" value="1"/>
</dbReference>
<dbReference type="SUPFAM" id="SSF57903">
    <property type="entry name" value="FYVE/PHD zinc finger"/>
    <property type="match status" value="1"/>
</dbReference>
<dbReference type="SUPFAM" id="SSF57716">
    <property type="entry name" value="Glucocorticoid receptor-like (DNA-binding domain)"/>
    <property type="match status" value="1"/>
</dbReference>
<dbReference type="SUPFAM" id="SSF63748">
    <property type="entry name" value="Tudor/PWWP/MBT"/>
    <property type="match status" value="1"/>
</dbReference>
<dbReference type="PROSITE" id="PS50982">
    <property type="entry name" value="MBD"/>
    <property type="match status" value="1"/>
</dbReference>
<dbReference type="PROSITE" id="PS50950">
    <property type="entry name" value="ZF_THAP"/>
    <property type="match status" value="1"/>
</dbReference>
<dbReference type="PROSITE" id="PS00028">
    <property type="entry name" value="ZINC_FINGER_C2H2_1"/>
    <property type="match status" value="1"/>
</dbReference>
<dbReference type="PROSITE" id="PS50157">
    <property type="entry name" value="ZINC_FINGER_C2H2_2"/>
    <property type="match status" value="1"/>
</dbReference>
<comment type="function">
    <text evidence="5 6 7">Component of the non-specific lethal (NLS) complex, a multiprotein complex that promotes expression of housekeeping genes on X chromosome and autosomes.</text>
</comment>
<comment type="subunit">
    <text evidence="5 6 7">Component of the non-specific lethal (NLS) histone acetyltransferase complex at least composed of mof, nls1, dgt1/NSL2, Rcd1/NSL3, Rcd5/MCRS2, MBD-R2 and wds.</text>
</comment>
<comment type="interaction">
    <interactant intactId="EBI-134420">
        <id>Q9VGA4</id>
    </interactant>
    <interactant intactId="EBI-9630827">
        <id>A4V2Z1</id>
        <label>nsl1</label>
    </interactant>
    <organismsDiffer>false</organismsDiffer>
    <experiments>5</experiments>
</comment>
<comment type="subcellular location">
    <subcellularLocation>
        <location evidence="6">Nucleus</location>
    </subcellularLocation>
    <subcellularLocation>
        <location evidence="5 6">Chromosome</location>
    </subcellularLocation>
    <text evidence="5">Associates with promoters of housekeeping genes on X chromosome and autosomes genes.</text>
</comment>
<keyword id="KW-0156">Chromatin regulator</keyword>
<keyword id="KW-0158">Chromosome</keyword>
<keyword id="KW-0238">DNA-binding</keyword>
<keyword id="KW-0479">Metal-binding</keyword>
<keyword id="KW-0539">Nucleus</keyword>
<keyword id="KW-1185">Reference proteome</keyword>
<keyword id="KW-0677">Repeat</keyword>
<keyword id="KW-0862">Zinc</keyword>
<keyword id="KW-0863">Zinc-finger</keyword>
<evidence type="ECO:0000255" key="1">
    <source>
        <dbReference type="PROSITE-ProRule" id="PRU00042"/>
    </source>
</evidence>
<evidence type="ECO:0000255" key="2">
    <source>
        <dbReference type="PROSITE-ProRule" id="PRU00309"/>
    </source>
</evidence>
<evidence type="ECO:0000255" key="3">
    <source>
        <dbReference type="PROSITE-ProRule" id="PRU00338"/>
    </source>
</evidence>
<evidence type="ECO:0000256" key="4">
    <source>
        <dbReference type="SAM" id="MobiDB-lite"/>
    </source>
</evidence>
<evidence type="ECO:0000269" key="5">
    <source>
    </source>
</evidence>
<evidence type="ECO:0000269" key="6">
    <source>
    </source>
</evidence>
<evidence type="ECO:0000269" key="7">
    <source>
    </source>
</evidence>
<evidence type="ECO:0000303" key="8">
    <source>
    </source>
</evidence>
<evidence type="ECO:0000305" key="9"/>
<evidence type="ECO:0000312" key="10">
    <source>
        <dbReference type="FlyBase" id="FBgn0038016"/>
    </source>
</evidence>
<gene>
    <name evidence="8 10" type="primary">MBD-R2</name>
    <name evidence="10" type="ORF">CG10042</name>
</gene>